<proteinExistence type="inferred from homology"/>
<reference key="1">
    <citation type="journal article" date="2003" name="Proc. Natl. Acad. Sci. U.S.A.">
        <title>The genome sequence of Blochmannia floridanus: comparative analysis of reduced genomes.</title>
        <authorList>
            <person name="Gil R."/>
            <person name="Silva F.J."/>
            <person name="Zientz E."/>
            <person name="Delmotte F."/>
            <person name="Gonzalez-Candelas F."/>
            <person name="Latorre A."/>
            <person name="Rausell C."/>
            <person name="Kamerbeek J."/>
            <person name="Gadau J."/>
            <person name="Hoelldobler B."/>
            <person name="van Ham R.C.H.J."/>
            <person name="Gross R."/>
            <person name="Moya A."/>
        </authorList>
    </citation>
    <scope>NUCLEOTIDE SEQUENCE [LARGE SCALE GENOMIC DNA]</scope>
</reference>
<comment type="function">
    <text evidence="1">Reversibly catalyzes the transfer of the carbamoyl group from carbamoyl phosphate (CP) to the N(epsilon) atom of ornithine (ORN) to produce L-citrulline.</text>
</comment>
<comment type="catalytic activity">
    <reaction evidence="2">
        <text>carbamoyl phosphate + L-ornithine = L-citrulline + phosphate + H(+)</text>
        <dbReference type="Rhea" id="RHEA:19513"/>
        <dbReference type="ChEBI" id="CHEBI:15378"/>
        <dbReference type="ChEBI" id="CHEBI:43474"/>
        <dbReference type="ChEBI" id="CHEBI:46911"/>
        <dbReference type="ChEBI" id="CHEBI:57743"/>
        <dbReference type="ChEBI" id="CHEBI:58228"/>
        <dbReference type="EC" id="2.1.3.3"/>
    </reaction>
</comment>
<comment type="subcellular location">
    <subcellularLocation>
        <location evidence="2">Cytoplasm</location>
    </subcellularLocation>
</comment>
<comment type="similarity">
    <text evidence="2">Belongs to the aspartate/ornithine carbamoyltransferase superfamily. OTCase family.</text>
</comment>
<gene>
    <name type="ordered locus">Bfl032</name>
</gene>
<accession>Q7VQT3</accession>
<organism>
    <name type="scientific">Blochmanniella floridana</name>
    <dbReference type="NCBI Taxonomy" id="203907"/>
    <lineage>
        <taxon>Bacteria</taxon>
        <taxon>Pseudomonadati</taxon>
        <taxon>Pseudomonadota</taxon>
        <taxon>Gammaproteobacteria</taxon>
        <taxon>Enterobacterales</taxon>
        <taxon>Enterobacteriaceae</taxon>
        <taxon>ant endosymbionts</taxon>
        <taxon>Candidatus Blochmanniella</taxon>
    </lineage>
</organism>
<feature type="chain" id="PRO_0000112905" description="Ornithine carbamoyltransferase">
    <location>
        <begin position="1"/>
        <end position="347"/>
    </location>
</feature>
<feature type="binding site" evidence="2">
    <location>
        <begin position="56"/>
        <end position="59"/>
    </location>
    <ligand>
        <name>carbamoyl phosphate</name>
        <dbReference type="ChEBI" id="CHEBI:58228"/>
    </ligand>
</feature>
<feature type="binding site" evidence="2">
    <location>
        <position position="83"/>
    </location>
    <ligand>
        <name>carbamoyl phosphate</name>
        <dbReference type="ChEBI" id="CHEBI:58228"/>
    </ligand>
</feature>
<feature type="binding site" evidence="2">
    <location>
        <position position="107"/>
    </location>
    <ligand>
        <name>carbamoyl phosphate</name>
        <dbReference type="ChEBI" id="CHEBI:58228"/>
    </ligand>
</feature>
<feature type="binding site" evidence="2">
    <location>
        <begin position="134"/>
        <end position="137"/>
    </location>
    <ligand>
        <name>carbamoyl phosphate</name>
        <dbReference type="ChEBI" id="CHEBI:58228"/>
    </ligand>
</feature>
<feature type="binding site" evidence="2">
    <location>
        <position position="168"/>
    </location>
    <ligand>
        <name>L-ornithine</name>
        <dbReference type="ChEBI" id="CHEBI:46911"/>
    </ligand>
</feature>
<feature type="binding site" evidence="2">
    <location>
        <position position="232"/>
    </location>
    <ligand>
        <name>L-ornithine</name>
        <dbReference type="ChEBI" id="CHEBI:46911"/>
    </ligand>
</feature>
<feature type="binding site" evidence="2">
    <location>
        <begin position="236"/>
        <end position="237"/>
    </location>
    <ligand>
        <name>L-ornithine</name>
        <dbReference type="ChEBI" id="CHEBI:46911"/>
    </ligand>
</feature>
<feature type="binding site" evidence="2">
    <location>
        <begin position="274"/>
        <end position="275"/>
    </location>
    <ligand>
        <name>carbamoyl phosphate</name>
        <dbReference type="ChEBI" id="CHEBI:58228"/>
    </ligand>
</feature>
<feature type="binding site" evidence="2">
    <location>
        <position position="320"/>
    </location>
    <ligand>
        <name>carbamoyl phosphate</name>
        <dbReference type="ChEBI" id="CHEBI:58228"/>
    </ligand>
</feature>
<dbReference type="EC" id="2.1.3.3" evidence="2"/>
<dbReference type="EMBL" id="BX248583">
    <property type="protein sequence ID" value="CAD83560.1"/>
    <property type="molecule type" value="Genomic_DNA"/>
</dbReference>
<dbReference type="SMR" id="Q7VQT3"/>
<dbReference type="STRING" id="203907.Bfl032"/>
<dbReference type="KEGG" id="bfl:Bfl032"/>
<dbReference type="eggNOG" id="COG0078">
    <property type="taxonomic scope" value="Bacteria"/>
</dbReference>
<dbReference type="HOGENOM" id="CLU_043846_3_1_6"/>
<dbReference type="OrthoDB" id="9802587at2"/>
<dbReference type="Proteomes" id="UP000002192">
    <property type="component" value="Chromosome"/>
</dbReference>
<dbReference type="GO" id="GO:0005737">
    <property type="term" value="C:cytoplasm"/>
    <property type="evidence" value="ECO:0007669"/>
    <property type="project" value="UniProtKB-SubCell"/>
</dbReference>
<dbReference type="GO" id="GO:0016597">
    <property type="term" value="F:amino acid binding"/>
    <property type="evidence" value="ECO:0007669"/>
    <property type="project" value="InterPro"/>
</dbReference>
<dbReference type="GO" id="GO:0004585">
    <property type="term" value="F:ornithine carbamoyltransferase activity"/>
    <property type="evidence" value="ECO:0007669"/>
    <property type="project" value="UniProtKB-UniRule"/>
</dbReference>
<dbReference type="GO" id="GO:0042450">
    <property type="term" value="P:arginine biosynthetic process via ornithine"/>
    <property type="evidence" value="ECO:0007669"/>
    <property type="project" value="TreeGrafter"/>
</dbReference>
<dbReference type="GO" id="GO:0019547">
    <property type="term" value="P:arginine catabolic process to ornithine"/>
    <property type="evidence" value="ECO:0007669"/>
    <property type="project" value="UniProtKB-UniRule"/>
</dbReference>
<dbReference type="GO" id="GO:0019240">
    <property type="term" value="P:citrulline biosynthetic process"/>
    <property type="evidence" value="ECO:0007669"/>
    <property type="project" value="TreeGrafter"/>
</dbReference>
<dbReference type="FunFam" id="3.40.50.1370:FF:000008">
    <property type="entry name" value="Ornithine carbamoyltransferase"/>
    <property type="match status" value="1"/>
</dbReference>
<dbReference type="Gene3D" id="3.40.50.1370">
    <property type="entry name" value="Aspartate/ornithine carbamoyltransferase"/>
    <property type="match status" value="2"/>
</dbReference>
<dbReference type="HAMAP" id="MF_01109">
    <property type="entry name" value="OTCase"/>
    <property type="match status" value="1"/>
</dbReference>
<dbReference type="InterPro" id="IPR006132">
    <property type="entry name" value="Asp/Orn_carbamoyltranf_P-bd"/>
</dbReference>
<dbReference type="InterPro" id="IPR006130">
    <property type="entry name" value="Asp/Orn_carbamoylTrfase"/>
</dbReference>
<dbReference type="InterPro" id="IPR036901">
    <property type="entry name" value="Asp/Orn_carbamoylTrfase_sf"/>
</dbReference>
<dbReference type="InterPro" id="IPR006131">
    <property type="entry name" value="Asp_carbamoyltransf_Asp/Orn-bd"/>
</dbReference>
<dbReference type="InterPro" id="IPR002292">
    <property type="entry name" value="Orn/put_carbamltrans"/>
</dbReference>
<dbReference type="InterPro" id="IPR024904">
    <property type="entry name" value="OTCase_ArgI"/>
</dbReference>
<dbReference type="NCBIfam" id="TIGR00658">
    <property type="entry name" value="orni_carb_tr"/>
    <property type="match status" value="1"/>
</dbReference>
<dbReference type="PANTHER" id="PTHR45753:SF4">
    <property type="entry name" value="ORNITHINE CARBAMOYLTRANSFERASE SUBUNIT F-RELATED"/>
    <property type="match status" value="1"/>
</dbReference>
<dbReference type="PANTHER" id="PTHR45753">
    <property type="entry name" value="ORNITHINE CARBAMOYLTRANSFERASE, MITOCHONDRIAL"/>
    <property type="match status" value="1"/>
</dbReference>
<dbReference type="Pfam" id="PF00185">
    <property type="entry name" value="OTCace"/>
    <property type="match status" value="1"/>
</dbReference>
<dbReference type="Pfam" id="PF02729">
    <property type="entry name" value="OTCace_N"/>
    <property type="match status" value="1"/>
</dbReference>
<dbReference type="PRINTS" id="PR00100">
    <property type="entry name" value="AOTCASE"/>
</dbReference>
<dbReference type="PRINTS" id="PR00102">
    <property type="entry name" value="OTCASE"/>
</dbReference>
<dbReference type="SUPFAM" id="SSF53671">
    <property type="entry name" value="Aspartate/ornithine carbamoyltransferase"/>
    <property type="match status" value="1"/>
</dbReference>
<protein>
    <recommendedName>
        <fullName evidence="2">Ornithine carbamoyltransferase</fullName>
        <shortName evidence="2">OTCase</shortName>
        <ecNumber evidence="2">2.1.3.3</ecNumber>
    </recommendedName>
</protein>
<evidence type="ECO:0000250" key="1"/>
<evidence type="ECO:0000255" key="2">
    <source>
        <dbReference type="HAMAP-Rule" id="MF_01109"/>
    </source>
</evidence>
<keyword id="KW-0963">Cytoplasm</keyword>
<keyword id="KW-1185">Reference proteome</keyword>
<keyword id="KW-0808">Transferase</keyword>
<name>OTC_BLOFL</name>
<sequence>MNQLYQRSFLRLMDFSMNEIMYILRLSHFLKQQKSNHTETQKLHKKNIVLIFENHSTRTRCAFEVAAFDQGARVTCLTPNISQIGHKESIKDTAKILGRMYHGIQYRGYNQDTINIFAQYSNVPVWNGLTEQFHPTQMLADLMTMQEQVPHKSFCKIKLAYVGDARNNIGNSLLEAASIIGFDLRLVSPREFWPQQELLTTCRKLTKLNKVNILLTENIQEGVKDVDFLYTDVWVSMGENEKVWTHRISLLSPYQVNQDMINYTGNSNVKFLHCLPALHNNETTIGKKIAHKHNLFNGLEVTNEIFESKHSIVFDQAENRLHTIKALMISTLLPNLYHKNITFHTKN</sequence>